<proteinExistence type="evidence at transcript level"/>
<comment type="function">
    <text evidence="3">Regulates adipogenesis.</text>
</comment>
<comment type="subcellular location">
    <subcellularLocation>
        <location evidence="6">Membrane</location>
        <topology evidence="6">Single-pass type I membrane protein</topology>
    </subcellularLocation>
</comment>
<comment type="alternative products">
    <event type="alternative splicing"/>
    <isoform>
        <id>Q8K1E3-1</id>
        <name>2</name>
        <sequence type="displayed"/>
    </isoform>
    <isoform>
        <id>Q8K1E3-3</id>
        <name>1</name>
        <sequence type="described" ref="VSP_039583"/>
    </isoform>
    <isoform>
        <id>Q8K1E3-4</id>
        <name>3</name>
        <sequence type="described" ref="VSP_039584"/>
    </isoform>
</comment>
<comment type="tissue specificity">
    <text evidence="3">Detected in a number of tissues including lung, brain, adrenal gland, testis, adult liver, placenta, ovary and thymus. Not detected in fetal liver or in adult spleen, muscle and heart.</text>
</comment>
<comment type="developmental stage">
    <text evidence="3">Absent from liver after birth, but increases around postnatal day 16.</text>
</comment>
<comment type="miscellaneous">
    <molecule>Isoform 3</molecule>
    <text evidence="6">Splice sites are non-canonical.</text>
</comment>
<comment type="sequence caution" evidence="6">
    <conflict type="erroneous initiation">
        <sequence resource="EMBL-CDS" id="BAA88686"/>
    </conflict>
    <text>Truncated N-terminus.</text>
</comment>
<gene>
    <name type="primary">Dlk2</name>
    <name type="synonym">Egfl9</name>
</gene>
<evidence type="ECO:0000255" key="1"/>
<evidence type="ECO:0000255" key="2">
    <source>
        <dbReference type="PROSITE-ProRule" id="PRU00076"/>
    </source>
</evidence>
<evidence type="ECO:0000269" key="3">
    <source>
    </source>
</evidence>
<evidence type="ECO:0000303" key="4">
    <source>
    </source>
</evidence>
<evidence type="ECO:0000303" key="5">
    <source>
    </source>
</evidence>
<evidence type="ECO:0000305" key="6"/>
<reference key="1">
    <citation type="journal article" date="2007" name="J. Mol. Biol.">
        <title>The novel gene EGFL9/Dlk2, highly homologous to Dlk1, functions as a modulator of adipogenesis.</title>
        <authorList>
            <person name="Nueda M.L."/>
            <person name="Baladron V."/>
            <person name="Garcia-Ramirez J.J."/>
            <person name="Sanchez-Solana B."/>
            <person name="Ruvira M.D."/>
            <person name="Rivero S."/>
            <person name="Ballesteros M.A."/>
            <person name="Monsalve E.M."/>
            <person name="Diaz-Guerra M.J."/>
            <person name="Ruiz-Hidalgo M.J."/>
            <person name="Laborda J."/>
        </authorList>
    </citation>
    <scope>NUCLEOTIDE SEQUENCE [MRNA] (ISOFORM 2)</scope>
    <scope>FUNCTION</scope>
    <scope>TISSUE SPECIFICITY</scope>
    <scope>DEVELOPMENTAL STAGE</scope>
</reference>
<reference key="2">
    <citation type="journal article" date="2009" name="PLoS Biol.">
        <title>Lineage-specific biology revealed by a finished genome assembly of the mouse.</title>
        <authorList>
            <person name="Church D.M."/>
            <person name="Goodstadt L."/>
            <person name="Hillier L.W."/>
            <person name="Zody M.C."/>
            <person name="Goldstein S."/>
            <person name="She X."/>
            <person name="Bult C.J."/>
            <person name="Agarwala R."/>
            <person name="Cherry J.L."/>
            <person name="DiCuccio M."/>
            <person name="Hlavina W."/>
            <person name="Kapustin Y."/>
            <person name="Meric P."/>
            <person name="Maglott D."/>
            <person name="Birtle Z."/>
            <person name="Marques A.C."/>
            <person name="Graves T."/>
            <person name="Zhou S."/>
            <person name="Teague B."/>
            <person name="Potamousis K."/>
            <person name="Churas C."/>
            <person name="Place M."/>
            <person name="Herschleb J."/>
            <person name="Runnheim R."/>
            <person name="Forrest D."/>
            <person name="Amos-Landgraf J."/>
            <person name="Schwartz D.C."/>
            <person name="Cheng Z."/>
            <person name="Lindblad-Toh K."/>
            <person name="Eichler E.E."/>
            <person name="Ponting C.P."/>
        </authorList>
    </citation>
    <scope>NUCLEOTIDE SEQUENCE [LARGE SCALE GENOMIC DNA]</scope>
    <source>
        <strain>C57BL/6J</strain>
    </source>
</reference>
<reference key="3">
    <citation type="submission" date="2005-07" db="EMBL/GenBank/DDBJ databases">
        <authorList>
            <person name="Mural R.J."/>
            <person name="Adams M.D."/>
            <person name="Myers E.W."/>
            <person name="Smith H.O."/>
            <person name="Venter J.C."/>
        </authorList>
    </citation>
    <scope>NUCLEOTIDE SEQUENCE [LARGE SCALE GENOMIC DNA]</scope>
</reference>
<reference key="4">
    <citation type="journal article" date="2004" name="Genome Res.">
        <title>The status, quality, and expansion of the NIH full-length cDNA project: the Mammalian Gene Collection (MGC).</title>
        <authorList>
            <consortium name="The MGC Project Team"/>
        </authorList>
    </citation>
    <scope>NUCLEOTIDE SEQUENCE [LARGE SCALE MRNA] (ISOFORMS 2 AND 3)</scope>
    <source>
        <strain>FVB/N</strain>
        <tissue>Salivary gland</tissue>
    </source>
</reference>
<reference key="5">
    <citation type="journal article" date="2005" name="Science">
        <title>The transcriptional landscape of the mammalian genome.</title>
        <authorList>
            <person name="Carninci P."/>
            <person name="Kasukawa T."/>
            <person name="Katayama S."/>
            <person name="Gough J."/>
            <person name="Frith M.C."/>
            <person name="Maeda N."/>
            <person name="Oyama R."/>
            <person name="Ravasi T."/>
            <person name="Lenhard B."/>
            <person name="Wells C."/>
            <person name="Kodzius R."/>
            <person name="Shimokawa K."/>
            <person name="Bajic V.B."/>
            <person name="Brenner S.E."/>
            <person name="Batalov S."/>
            <person name="Forrest A.R."/>
            <person name="Zavolan M."/>
            <person name="Davis M.J."/>
            <person name="Wilming L.G."/>
            <person name="Aidinis V."/>
            <person name="Allen J.E."/>
            <person name="Ambesi-Impiombato A."/>
            <person name="Apweiler R."/>
            <person name="Aturaliya R.N."/>
            <person name="Bailey T.L."/>
            <person name="Bansal M."/>
            <person name="Baxter L."/>
            <person name="Beisel K.W."/>
            <person name="Bersano T."/>
            <person name="Bono H."/>
            <person name="Chalk A.M."/>
            <person name="Chiu K.P."/>
            <person name="Choudhary V."/>
            <person name="Christoffels A."/>
            <person name="Clutterbuck D.R."/>
            <person name="Crowe M.L."/>
            <person name="Dalla E."/>
            <person name="Dalrymple B.P."/>
            <person name="de Bono B."/>
            <person name="Della Gatta G."/>
            <person name="di Bernardo D."/>
            <person name="Down T."/>
            <person name="Engstrom P."/>
            <person name="Fagiolini M."/>
            <person name="Faulkner G."/>
            <person name="Fletcher C.F."/>
            <person name="Fukushima T."/>
            <person name="Furuno M."/>
            <person name="Futaki S."/>
            <person name="Gariboldi M."/>
            <person name="Georgii-Hemming P."/>
            <person name="Gingeras T.R."/>
            <person name="Gojobori T."/>
            <person name="Green R.E."/>
            <person name="Gustincich S."/>
            <person name="Harbers M."/>
            <person name="Hayashi Y."/>
            <person name="Hensch T.K."/>
            <person name="Hirokawa N."/>
            <person name="Hill D."/>
            <person name="Huminiecki L."/>
            <person name="Iacono M."/>
            <person name="Ikeo K."/>
            <person name="Iwama A."/>
            <person name="Ishikawa T."/>
            <person name="Jakt M."/>
            <person name="Kanapin A."/>
            <person name="Katoh M."/>
            <person name="Kawasawa Y."/>
            <person name="Kelso J."/>
            <person name="Kitamura H."/>
            <person name="Kitano H."/>
            <person name="Kollias G."/>
            <person name="Krishnan S.P."/>
            <person name="Kruger A."/>
            <person name="Kummerfeld S.K."/>
            <person name="Kurochkin I.V."/>
            <person name="Lareau L.F."/>
            <person name="Lazarevic D."/>
            <person name="Lipovich L."/>
            <person name="Liu J."/>
            <person name="Liuni S."/>
            <person name="McWilliam S."/>
            <person name="Madan Babu M."/>
            <person name="Madera M."/>
            <person name="Marchionni L."/>
            <person name="Matsuda H."/>
            <person name="Matsuzawa S."/>
            <person name="Miki H."/>
            <person name="Mignone F."/>
            <person name="Miyake S."/>
            <person name="Morris K."/>
            <person name="Mottagui-Tabar S."/>
            <person name="Mulder N."/>
            <person name="Nakano N."/>
            <person name="Nakauchi H."/>
            <person name="Ng P."/>
            <person name="Nilsson R."/>
            <person name="Nishiguchi S."/>
            <person name="Nishikawa S."/>
            <person name="Nori F."/>
            <person name="Ohara O."/>
            <person name="Okazaki Y."/>
            <person name="Orlando V."/>
            <person name="Pang K.C."/>
            <person name="Pavan W.J."/>
            <person name="Pavesi G."/>
            <person name="Pesole G."/>
            <person name="Petrovsky N."/>
            <person name="Piazza S."/>
            <person name="Reed J."/>
            <person name="Reid J.F."/>
            <person name="Ring B.Z."/>
            <person name="Ringwald M."/>
            <person name="Rost B."/>
            <person name="Ruan Y."/>
            <person name="Salzberg S.L."/>
            <person name="Sandelin A."/>
            <person name="Schneider C."/>
            <person name="Schoenbach C."/>
            <person name="Sekiguchi K."/>
            <person name="Semple C.A."/>
            <person name="Seno S."/>
            <person name="Sessa L."/>
            <person name="Sheng Y."/>
            <person name="Shibata Y."/>
            <person name="Shimada H."/>
            <person name="Shimada K."/>
            <person name="Silva D."/>
            <person name="Sinclair B."/>
            <person name="Sperling S."/>
            <person name="Stupka E."/>
            <person name="Sugiura K."/>
            <person name="Sultana R."/>
            <person name="Takenaka Y."/>
            <person name="Taki K."/>
            <person name="Tammoja K."/>
            <person name="Tan S.L."/>
            <person name="Tang S."/>
            <person name="Taylor M.S."/>
            <person name="Tegner J."/>
            <person name="Teichmann S.A."/>
            <person name="Ueda H.R."/>
            <person name="van Nimwegen E."/>
            <person name="Verardo R."/>
            <person name="Wei C.L."/>
            <person name="Yagi K."/>
            <person name="Yamanishi H."/>
            <person name="Zabarovsky E."/>
            <person name="Zhu S."/>
            <person name="Zimmer A."/>
            <person name="Hide W."/>
            <person name="Bult C."/>
            <person name="Grimmond S.M."/>
            <person name="Teasdale R.D."/>
            <person name="Liu E.T."/>
            <person name="Brusic V."/>
            <person name="Quackenbush J."/>
            <person name="Wahlestedt C."/>
            <person name="Mattick J.S."/>
            <person name="Hume D.A."/>
            <person name="Kai C."/>
            <person name="Sasaki D."/>
            <person name="Tomaru Y."/>
            <person name="Fukuda S."/>
            <person name="Kanamori-Katayama M."/>
            <person name="Suzuki M."/>
            <person name="Aoki J."/>
            <person name="Arakawa T."/>
            <person name="Iida J."/>
            <person name="Imamura K."/>
            <person name="Itoh M."/>
            <person name="Kato T."/>
            <person name="Kawaji H."/>
            <person name="Kawagashira N."/>
            <person name="Kawashima T."/>
            <person name="Kojima M."/>
            <person name="Kondo S."/>
            <person name="Konno H."/>
            <person name="Nakano K."/>
            <person name="Ninomiya N."/>
            <person name="Nishio T."/>
            <person name="Okada M."/>
            <person name="Plessy C."/>
            <person name="Shibata K."/>
            <person name="Shiraki T."/>
            <person name="Suzuki S."/>
            <person name="Tagami M."/>
            <person name="Waki K."/>
            <person name="Watahiki A."/>
            <person name="Okamura-Oho Y."/>
            <person name="Suzuki H."/>
            <person name="Kawai J."/>
            <person name="Hayashizaki Y."/>
        </authorList>
    </citation>
    <scope>NUCLEOTIDE SEQUENCE [LARGE SCALE MRNA] OF 1-65 (ISOFORM 1)</scope>
</reference>
<reference key="6">
    <citation type="submission" date="1998-02" db="EMBL/GenBank/DDBJ databases">
        <title>Endothelial cell specific protein S-1.</title>
        <authorList>
            <person name="Fukudome K."/>
            <person name="Tsuneyoshi N."/>
            <person name="Kimoto M."/>
        </authorList>
    </citation>
    <scope>NUCLEOTIDE SEQUENCE [MRNA] OF 259-382</scope>
</reference>
<feature type="signal peptide" evidence="1">
    <location>
        <begin position="1"/>
        <end position="26"/>
    </location>
</feature>
<feature type="chain" id="PRO_0000396620" description="Protein delta homolog 2">
    <location>
        <begin position="27"/>
        <end position="382"/>
    </location>
</feature>
<feature type="topological domain" description="Extracellular" evidence="1">
    <location>
        <begin position="27"/>
        <end position="305"/>
    </location>
</feature>
<feature type="transmembrane region" description="Helical" evidence="1">
    <location>
        <begin position="306"/>
        <end position="326"/>
    </location>
</feature>
<feature type="topological domain" description="Cytoplasmic" evidence="1">
    <location>
        <begin position="327"/>
        <end position="382"/>
    </location>
</feature>
<feature type="domain" description="EGF-like 1" evidence="2">
    <location>
        <begin position="27"/>
        <end position="58"/>
    </location>
</feature>
<feature type="domain" description="EGF-like 2" evidence="2">
    <location>
        <begin position="62"/>
        <end position="89"/>
    </location>
</feature>
<feature type="domain" description="EGF-like 3" evidence="2">
    <location>
        <begin position="91"/>
        <end position="129"/>
    </location>
</feature>
<feature type="domain" description="EGF-like 4" evidence="2">
    <location>
        <begin position="131"/>
        <end position="172"/>
    </location>
</feature>
<feature type="domain" description="EGF-like 5; calcium-binding" evidence="2">
    <location>
        <begin position="174"/>
        <end position="210"/>
    </location>
</feature>
<feature type="domain" description="EGF-like 6; calcium-binding" evidence="2">
    <location>
        <begin position="212"/>
        <end position="248"/>
    </location>
</feature>
<feature type="glycosylation site" description="N-linked (GlcNAc...) asparagine" evidence="1">
    <location>
        <position position="157"/>
    </location>
</feature>
<feature type="disulfide bond" evidence="2">
    <location>
        <begin position="29"/>
        <end position="40"/>
    </location>
</feature>
<feature type="disulfide bond" evidence="2">
    <location>
        <begin position="33"/>
        <end position="46"/>
    </location>
</feature>
<feature type="disulfide bond" evidence="2">
    <location>
        <begin position="48"/>
        <end position="57"/>
    </location>
</feature>
<feature type="disulfide bond" evidence="2">
    <location>
        <begin position="66"/>
        <end position="71"/>
    </location>
</feature>
<feature type="disulfide bond" evidence="2">
    <location>
        <begin position="79"/>
        <end position="88"/>
    </location>
</feature>
<feature type="disulfide bond" evidence="2">
    <location>
        <begin position="95"/>
        <end position="107"/>
    </location>
</feature>
<feature type="disulfide bond" evidence="2">
    <location>
        <begin position="101"/>
        <end position="117"/>
    </location>
</feature>
<feature type="disulfide bond" evidence="2">
    <location>
        <begin position="119"/>
        <end position="128"/>
    </location>
</feature>
<feature type="disulfide bond" evidence="2">
    <location>
        <begin position="135"/>
        <end position="148"/>
    </location>
</feature>
<feature type="disulfide bond" evidence="2">
    <location>
        <begin position="142"/>
        <end position="160"/>
    </location>
</feature>
<feature type="disulfide bond" evidence="2">
    <location>
        <begin position="162"/>
        <end position="171"/>
    </location>
</feature>
<feature type="disulfide bond" evidence="2">
    <location>
        <begin position="178"/>
        <end position="189"/>
    </location>
</feature>
<feature type="disulfide bond" evidence="2">
    <location>
        <begin position="183"/>
        <end position="198"/>
    </location>
</feature>
<feature type="disulfide bond" evidence="2">
    <location>
        <begin position="200"/>
        <end position="209"/>
    </location>
</feature>
<feature type="disulfide bond" evidence="2">
    <location>
        <begin position="216"/>
        <end position="227"/>
    </location>
</feature>
<feature type="disulfide bond" evidence="2">
    <location>
        <begin position="221"/>
        <end position="236"/>
    </location>
</feature>
<feature type="disulfide bond" evidence="2">
    <location>
        <begin position="238"/>
        <end position="247"/>
    </location>
</feature>
<feature type="splice variant" id="VSP_039583" description="In isoform 1." evidence="5">
    <original>M</original>
    <variation>MKITMRVSVPLSPRQAASQPVPSHRCLHVWPFIRPSLLRPELTM</variation>
    <location>
        <position position="1"/>
    </location>
</feature>
<feature type="splice variant" id="VSP_039584" description="In isoform 3." evidence="4">
    <original>M</original>
    <variation>MKITMRPGDASPPSRRCLHVWPFIRPSLLRPELTM</variation>
    <location>
        <position position="1"/>
    </location>
</feature>
<feature type="sequence conflict" description="In Ref. 4; AAI18058." evidence="6" ref="4">
    <original>C</original>
    <variation>Y</variation>
    <location>
        <position position="236"/>
    </location>
</feature>
<feature type="sequence conflict" description="In Ref. 6; BAA88686." evidence="6" ref="6">
    <location>
        <begin position="295"/>
        <end position="311"/>
    </location>
</feature>
<organism>
    <name type="scientific">Mus musculus</name>
    <name type="common">Mouse</name>
    <dbReference type="NCBI Taxonomy" id="10090"/>
    <lineage>
        <taxon>Eukaryota</taxon>
        <taxon>Metazoa</taxon>
        <taxon>Chordata</taxon>
        <taxon>Craniata</taxon>
        <taxon>Vertebrata</taxon>
        <taxon>Euteleostomi</taxon>
        <taxon>Mammalia</taxon>
        <taxon>Eutheria</taxon>
        <taxon>Euarchontoglires</taxon>
        <taxon>Glires</taxon>
        <taxon>Rodentia</taxon>
        <taxon>Myomorpha</taxon>
        <taxon>Muroidea</taxon>
        <taxon>Muridae</taxon>
        <taxon>Murinae</taxon>
        <taxon>Mus</taxon>
        <taxon>Mus</taxon>
    </lineage>
</organism>
<dbReference type="EMBL" id="FM180474">
    <property type="protein sequence ID" value="CAQ86598.1"/>
    <property type="molecule type" value="mRNA"/>
</dbReference>
<dbReference type="EMBL" id="CT009572">
    <property type="status" value="NOT_ANNOTATED_CDS"/>
    <property type="molecule type" value="Genomic_DNA"/>
</dbReference>
<dbReference type="EMBL" id="CH466559">
    <property type="protein sequence ID" value="EDL23496.1"/>
    <property type="molecule type" value="Genomic_DNA"/>
</dbReference>
<dbReference type="EMBL" id="BC019431">
    <property type="status" value="NOT_ANNOTATED_CDS"/>
    <property type="molecule type" value="mRNA"/>
</dbReference>
<dbReference type="EMBL" id="BC118057">
    <property type="protein sequence ID" value="AAI18058.1"/>
    <property type="molecule type" value="mRNA"/>
</dbReference>
<dbReference type="EMBL" id="BC122518">
    <property type="protein sequence ID" value="AAI22519.1"/>
    <property type="molecule type" value="mRNA"/>
</dbReference>
<dbReference type="EMBL" id="BY271273">
    <property type="status" value="NOT_ANNOTATED_CDS"/>
    <property type="molecule type" value="mRNA"/>
</dbReference>
<dbReference type="EMBL" id="AB011019">
    <property type="protein sequence ID" value="BAA88686.1"/>
    <property type="status" value="ALT_INIT"/>
    <property type="molecule type" value="mRNA"/>
</dbReference>
<dbReference type="CCDS" id="CCDS37634.2">
    <molecule id="Q8K1E3-1"/>
</dbReference>
<dbReference type="RefSeq" id="NP_001272942.1">
    <molecule id="Q8K1E3-1"/>
    <property type="nucleotide sequence ID" value="NM_001286013.2"/>
</dbReference>
<dbReference type="RefSeq" id="NP_001272957.1">
    <molecule id="Q8K1E3-1"/>
    <property type="nucleotide sequence ID" value="NM_001286028.2"/>
</dbReference>
<dbReference type="RefSeq" id="NP_001401370.1">
    <molecule id="Q8K1E3-1"/>
    <property type="nucleotide sequence ID" value="NM_001414441.1"/>
</dbReference>
<dbReference type="RefSeq" id="NP_001401371.1">
    <molecule id="Q8K1E3-1"/>
    <property type="nucleotide sequence ID" value="NM_001414442.1"/>
</dbReference>
<dbReference type="RefSeq" id="NP_001401372.1">
    <molecule id="Q8K1E3-1"/>
    <property type="nucleotide sequence ID" value="NM_001414443.1"/>
</dbReference>
<dbReference type="RefSeq" id="NP_001401373.1">
    <molecule id="Q8K1E3-1"/>
    <property type="nucleotide sequence ID" value="NM_001414444.1"/>
</dbReference>
<dbReference type="RefSeq" id="XP_006523451.1">
    <property type="nucleotide sequence ID" value="XM_006523388.1"/>
</dbReference>
<dbReference type="RefSeq" id="XP_006523452.1">
    <property type="nucleotide sequence ID" value="XM_006523389.1"/>
</dbReference>
<dbReference type="RefSeq" id="XP_011244537.1">
    <property type="nucleotide sequence ID" value="XM_011246235.1"/>
</dbReference>
<dbReference type="SMR" id="Q8K1E3"/>
<dbReference type="FunCoup" id="Q8K1E3">
    <property type="interactions" value="51"/>
</dbReference>
<dbReference type="STRING" id="10090.ENSMUSP00000128897"/>
<dbReference type="GlyCosmos" id="Q8K1E3">
    <property type="glycosylation" value="1 site, No reported glycans"/>
</dbReference>
<dbReference type="GlyGen" id="Q8K1E3">
    <property type="glycosylation" value="2 sites"/>
</dbReference>
<dbReference type="iPTMnet" id="Q8K1E3"/>
<dbReference type="PhosphoSitePlus" id="Q8K1E3"/>
<dbReference type="PaxDb" id="10090-ENSMUSP00000058470"/>
<dbReference type="ProteomicsDB" id="279684">
    <molecule id="Q8K1E3-1"/>
</dbReference>
<dbReference type="ProteomicsDB" id="279685">
    <molecule id="Q8K1E3-3"/>
</dbReference>
<dbReference type="ProteomicsDB" id="279686">
    <molecule id="Q8K1E3-4"/>
</dbReference>
<dbReference type="Antibodypedia" id="30417">
    <property type="antibodies" value="115 antibodies from 24 providers"/>
</dbReference>
<dbReference type="DNASU" id="106565"/>
<dbReference type="Ensembl" id="ENSMUST00000061722.13">
    <molecule id="Q8K1E3-3"/>
    <property type="protein sequence ID" value="ENSMUSP00000058470.7"/>
    <property type="gene ID" value="ENSMUSG00000047428.15"/>
</dbReference>
<dbReference type="Ensembl" id="ENSMUST00000166280.8">
    <molecule id="Q8K1E3-1"/>
    <property type="protein sequence ID" value="ENSMUSP00000126993.2"/>
    <property type="gene ID" value="ENSMUSG00000047428.15"/>
</dbReference>
<dbReference type="Ensembl" id="ENSMUST00000166617.8">
    <molecule id="Q8K1E3-1"/>
    <property type="protein sequence ID" value="ENSMUSP00000128897.2"/>
    <property type="gene ID" value="ENSMUSG00000047428.15"/>
</dbReference>
<dbReference type="GeneID" id="106565"/>
<dbReference type="KEGG" id="mmu:106565"/>
<dbReference type="UCSC" id="uc008csl.2">
    <molecule id="Q8K1E3-1"/>
    <property type="organism name" value="mouse"/>
</dbReference>
<dbReference type="AGR" id="MGI:2146838"/>
<dbReference type="CTD" id="65989"/>
<dbReference type="MGI" id="MGI:2146838">
    <property type="gene designation" value="Dlk2"/>
</dbReference>
<dbReference type="VEuPathDB" id="HostDB:ENSMUSG00000047428"/>
<dbReference type="eggNOG" id="KOG1217">
    <property type="taxonomic scope" value="Eukaryota"/>
</dbReference>
<dbReference type="GeneTree" id="ENSGT00940000160761"/>
<dbReference type="HOGENOM" id="CLU_039179_1_0_1"/>
<dbReference type="InParanoid" id="Q8K1E3"/>
<dbReference type="OMA" id="SVPEPTW"/>
<dbReference type="TreeFam" id="TF351835"/>
<dbReference type="BioGRID-ORCS" id="106565">
    <property type="hits" value="0 hits in 79 CRISPR screens"/>
</dbReference>
<dbReference type="ChiTaRS" id="Dlk2">
    <property type="organism name" value="mouse"/>
</dbReference>
<dbReference type="PRO" id="PR:Q8K1E3"/>
<dbReference type="Proteomes" id="UP000000589">
    <property type="component" value="Chromosome 17"/>
</dbReference>
<dbReference type="RNAct" id="Q8K1E3">
    <property type="molecule type" value="protein"/>
</dbReference>
<dbReference type="Bgee" id="ENSMUSG00000047428">
    <property type="expression patterns" value="Expressed in embryonic brain and 102 other cell types or tissues"/>
</dbReference>
<dbReference type="ExpressionAtlas" id="Q8K1E3">
    <property type="expression patterns" value="baseline and differential"/>
</dbReference>
<dbReference type="GO" id="GO:0016020">
    <property type="term" value="C:membrane"/>
    <property type="evidence" value="ECO:0007669"/>
    <property type="project" value="UniProtKB-SubCell"/>
</dbReference>
<dbReference type="GO" id="GO:0005509">
    <property type="term" value="F:calcium ion binding"/>
    <property type="evidence" value="ECO:0007669"/>
    <property type="project" value="InterPro"/>
</dbReference>
<dbReference type="GO" id="GO:0042802">
    <property type="term" value="F:identical protein binding"/>
    <property type="evidence" value="ECO:0000353"/>
    <property type="project" value="MGI"/>
</dbReference>
<dbReference type="GO" id="GO:0045746">
    <property type="term" value="P:negative regulation of Notch signaling pathway"/>
    <property type="evidence" value="ECO:0000316"/>
    <property type="project" value="MGI"/>
</dbReference>
<dbReference type="GO" id="GO:0045598">
    <property type="term" value="P:regulation of fat cell differentiation"/>
    <property type="evidence" value="ECO:0000314"/>
    <property type="project" value="UniProtKB"/>
</dbReference>
<dbReference type="CDD" id="cd00054">
    <property type="entry name" value="EGF_CA"/>
    <property type="match status" value="4"/>
</dbReference>
<dbReference type="FunFam" id="2.10.25.10:FF:000018">
    <property type="entry name" value="Delta-like 1"/>
    <property type="match status" value="1"/>
</dbReference>
<dbReference type="FunFam" id="2.10.25.10:FF:000263">
    <property type="entry name" value="Protein delta homolog 2"/>
    <property type="match status" value="1"/>
</dbReference>
<dbReference type="FunFam" id="2.10.25.10:FF:000118">
    <property type="entry name" value="protein delta homolog 2"/>
    <property type="match status" value="2"/>
</dbReference>
<dbReference type="FunFam" id="2.10.25.10:FF:000334">
    <property type="entry name" value="protein delta homolog 2 isoform X1"/>
    <property type="match status" value="1"/>
</dbReference>
<dbReference type="Gene3D" id="2.10.25.10">
    <property type="entry name" value="Laminin"/>
    <property type="match status" value="5"/>
</dbReference>
<dbReference type="InterPro" id="IPR001881">
    <property type="entry name" value="EGF-like_Ca-bd_dom"/>
</dbReference>
<dbReference type="InterPro" id="IPR013032">
    <property type="entry name" value="EGF-like_CS"/>
</dbReference>
<dbReference type="InterPro" id="IPR000742">
    <property type="entry name" value="EGF-like_dom"/>
</dbReference>
<dbReference type="InterPro" id="IPR000152">
    <property type="entry name" value="EGF-type_Asp/Asn_hydroxyl_site"/>
</dbReference>
<dbReference type="InterPro" id="IPR018097">
    <property type="entry name" value="EGF_Ca-bd_CS"/>
</dbReference>
<dbReference type="InterPro" id="IPR051022">
    <property type="entry name" value="Notch_Cell-Fate_Det"/>
</dbReference>
<dbReference type="PANTHER" id="PTHR24049">
    <property type="entry name" value="CRUMBS FAMILY MEMBER"/>
    <property type="match status" value="1"/>
</dbReference>
<dbReference type="PANTHER" id="PTHR24049:SF38">
    <property type="entry name" value="DELTA-LIKE PROTEIN"/>
    <property type="match status" value="1"/>
</dbReference>
<dbReference type="Pfam" id="PF00008">
    <property type="entry name" value="EGF"/>
    <property type="match status" value="3"/>
</dbReference>
<dbReference type="Pfam" id="PF21700">
    <property type="entry name" value="EGF_DL_JAG"/>
    <property type="match status" value="1"/>
</dbReference>
<dbReference type="Pfam" id="PF12661">
    <property type="entry name" value="hEGF"/>
    <property type="match status" value="1"/>
</dbReference>
<dbReference type="PRINTS" id="PR00010">
    <property type="entry name" value="EGFBLOOD"/>
</dbReference>
<dbReference type="SMART" id="SM00181">
    <property type="entry name" value="EGF"/>
    <property type="match status" value="6"/>
</dbReference>
<dbReference type="SMART" id="SM00179">
    <property type="entry name" value="EGF_CA"/>
    <property type="match status" value="4"/>
</dbReference>
<dbReference type="SUPFAM" id="SSF57196">
    <property type="entry name" value="EGF/Laminin"/>
    <property type="match status" value="4"/>
</dbReference>
<dbReference type="PROSITE" id="PS00010">
    <property type="entry name" value="ASX_HYDROXYL"/>
    <property type="match status" value="2"/>
</dbReference>
<dbReference type="PROSITE" id="PS00022">
    <property type="entry name" value="EGF_1"/>
    <property type="match status" value="6"/>
</dbReference>
<dbReference type="PROSITE" id="PS01186">
    <property type="entry name" value="EGF_2"/>
    <property type="match status" value="6"/>
</dbReference>
<dbReference type="PROSITE" id="PS50026">
    <property type="entry name" value="EGF_3"/>
    <property type="match status" value="6"/>
</dbReference>
<dbReference type="PROSITE" id="PS01187">
    <property type="entry name" value="EGF_CA"/>
    <property type="match status" value="2"/>
</dbReference>
<accession>Q8K1E3</accession>
<accession>B5B9L4</accession>
<accession>Q0IIP7</accession>
<accession>Q148N7</accession>
<accession>Q9QYP3</accession>
<sequence length="382" mass="40404">MPSGCRCLNLVCLLCILGATSQPARADDCSSHCDLAHGCCAPDGSCRCDPGWEGLHCERCVRMPGCQHGTCHQPWQCICHSGWAGKFCDKDEHICTSQSPCQNGGQCVYDGGGEYHCVCLPGFHGRGCERKAGPCEQAGFPCRNGGQCQDNQGFALNFTCRCLAGFMGAHCEVNVDDCLMRPCANGATCIDGINRFSCLCPEGFAGRFCTINLDDCASRPCQRGARCRDRVHDFDCLCPSGYGGKTCELVLPAPEPASVGTPQMPTSAVVVPATGPAPHSAGAGLLRISVKEVVRRQESGLGESSLVALVVFGSLTAALVLATVLLTLRAWRRGICPTGPCCYPAPHYAPARQDQECQVSMLPAGFPLSPDLPPEPGKTTAL</sequence>
<keyword id="KW-0025">Alternative splicing</keyword>
<keyword id="KW-0106">Calcium</keyword>
<keyword id="KW-1015">Disulfide bond</keyword>
<keyword id="KW-0245">EGF-like domain</keyword>
<keyword id="KW-0325">Glycoprotein</keyword>
<keyword id="KW-0472">Membrane</keyword>
<keyword id="KW-1185">Reference proteome</keyword>
<keyword id="KW-0677">Repeat</keyword>
<keyword id="KW-0732">Signal</keyword>
<keyword id="KW-0812">Transmembrane</keyword>
<keyword id="KW-1133">Transmembrane helix</keyword>
<name>DLK2_MOUSE</name>
<protein>
    <recommendedName>
        <fullName>Protein delta homolog 2</fullName>
        <shortName>DLK-2</shortName>
    </recommendedName>
    <alternativeName>
        <fullName>Endothelial cell-specific protein S-1</fullName>
    </alternativeName>
    <alternativeName>
        <fullName>Epidermal growth factor-like protein 9</fullName>
        <shortName>EGF-like protein 9</shortName>
    </alternativeName>
</protein>